<feature type="chain" id="PRO_1000050072" description="Probable protein kinase UbiB">
    <location>
        <begin position="1"/>
        <end position="557"/>
    </location>
</feature>
<feature type="transmembrane region" description="Helical" evidence="1">
    <location>
        <begin position="506"/>
        <end position="526"/>
    </location>
</feature>
<feature type="transmembrane region" description="Helical" evidence="1">
    <location>
        <begin position="535"/>
        <end position="555"/>
    </location>
</feature>
<feature type="domain" description="Protein kinase" evidence="1">
    <location>
        <begin position="121"/>
        <end position="509"/>
    </location>
</feature>
<feature type="active site" description="Proton acceptor" evidence="1">
    <location>
        <position position="289"/>
    </location>
</feature>
<feature type="binding site" evidence="1">
    <location>
        <begin position="127"/>
        <end position="135"/>
    </location>
    <ligand>
        <name>ATP</name>
        <dbReference type="ChEBI" id="CHEBI:30616"/>
    </ligand>
</feature>
<feature type="binding site" evidence="1">
    <location>
        <position position="154"/>
    </location>
    <ligand>
        <name>ATP</name>
        <dbReference type="ChEBI" id="CHEBI:30616"/>
    </ligand>
</feature>
<sequence>MKAILRASRIGRVILRYRLDALLEGTPAERWLRLAKPFVPRASAEIAAQSRGARLRLALQELGPIFVKFGQILSTRRDLIPPDVAEELTLLQDRVKPFDGEAARLIVERALGLPVSVAFAAFDTTPLASASIAQVHAATLPPDANGLRREVVVKVLRPDIERQIDADIALLHSLATLVERTHPRADKIRPREVVAEIEGTLSAELDLQREGANASVLRRFWEGSDDLYVPEVIWSHTAERALTLERVYGIPSDDVAKLDAAGIDRKALAAKGVRVFYTQVFRDNFFHADAHAGNIWVDSDPERRLNPRFIALDFGIMGQLSQEDQYYLAENFMAIFHKDYRRMAELHVEAGWMPSNVRIDELEAAARSVCEPYFTRPLSEISLAEVLIKLFRVAQRYELTLQPQLILLQKTLLNIEGVGRQLDPKLDIWAVARPVLERILRERYSPRRVLGELRKRLPEIMTHAPDMPRLVHSWLKQQVEGRHQLDIRSSELRALDLSLRKLQTRVVTAITGSGLLVVAAVLYGLHPDGWYLGTVPVWSWISGGAGSAALLIAWLRR</sequence>
<comment type="function">
    <text evidence="1">Is probably a protein kinase regulator of UbiI activity which is involved in aerobic coenzyme Q (ubiquinone) biosynthesis.</text>
</comment>
<comment type="pathway">
    <text>Cofactor biosynthesis; ubiquinone biosynthesis [regulation].</text>
</comment>
<comment type="subcellular location">
    <subcellularLocation>
        <location evidence="1">Cell inner membrane</location>
        <topology evidence="1">Multi-pass membrane protein</topology>
    </subcellularLocation>
</comment>
<comment type="similarity">
    <text evidence="1">Belongs to the ABC1 family. UbiB subfamily.</text>
</comment>
<reference key="1">
    <citation type="journal article" date="2005" name="Genome Res.">
        <title>Comparative and functional genomic analyses of the pathogenicity of phytopathogen Xanthomonas campestris pv. campestris.</title>
        <authorList>
            <person name="Qian W."/>
            <person name="Jia Y."/>
            <person name="Ren S.-X."/>
            <person name="He Y.-Q."/>
            <person name="Feng J.-X."/>
            <person name="Lu L.-F."/>
            <person name="Sun Q."/>
            <person name="Ying G."/>
            <person name="Tang D.-J."/>
            <person name="Tang H."/>
            <person name="Wu W."/>
            <person name="Hao P."/>
            <person name="Wang L."/>
            <person name="Jiang B.-L."/>
            <person name="Zeng S."/>
            <person name="Gu W.-Y."/>
            <person name="Lu G."/>
            <person name="Rong L."/>
            <person name="Tian Y."/>
            <person name="Yao Z."/>
            <person name="Fu G."/>
            <person name="Chen B."/>
            <person name="Fang R."/>
            <person name="Qiang B."/>
            <person name="Chen Z."/>
            <person name="Zhao G.-P."/>
            <person name="Tang J.-L."/>
            <person name="He C."/>
        </authorList>
    </citation>
    <scope>NUCLEOTIDE SEQUENCE [LARGE SCALE GENOMIC DNA]</scope>
    <source>
        <strain>8004</strain>
    </source>
</reference>
<keyword id="KW-0067">ATP-binding</keyword>
<keyword id="KW-0997">Cell inner membrane</keyword>
<keyword id="KW-1003">Cell membrane</keyword>
<keyword id="KW-0418">Kinase</keyword>
<keyword id="KW-0472">Membrane</keyword>
<keyword id="KW-0547">Nucleotide-binding</keyword>
<keyword id="KW-0808">Transferase</keyword>
<keyword id="KW-0812">Transmembrane</keyword>
<keyword id="KW-1133">Transmembrane helix</keyword>
<keyword id="KW-0831">Ubiquinone biosynthesis</keyword>
<name>UBIB_XANC8</name>
<proteinExistence type="inferred from homology"/>
<protein>
    <recommendedName>
        <fullName evidence="1">Probable protein kinase UbiB</fullName>
        <ecNumber evidence="1">2.7.-.-</ecNumber>
    </recommendedName>
    <alternativeName>
        <fullName evidence="1">Ubiquinone biosynthesis protein UbiB</fullName>
    </alternativeName>
</protein>
<dbReference type="EC" id="2.7.-.-" evidence="1"/>
<dbReference type="EMBL" id="CP000050">
    <property type="protein sequence ID" value="AAY47321.1"/>
    <property type="molecule type" value="Genomic_DNA"/>
</dbReference>
<dbReference type="RefSeq" id="WP_011035479.1">
    <property type="nucleotide sequence ID" value="NZ_CP155948.1"/>
</dbReference>
<dbReference type="SMR" id="Q4V052"/>
<dbReference type="KEGG" id="xcb:XC_0234"/>
<dbReference type="HOGENOM" id="CLU_006533_0_0_6"/>
<dbReference type="UniPathway" id="UPA00232"/>
<dbReference type="Proteomes" id="UP000000420">
    <property type="component" value="Chromosome"/>
</dbReference>
<dbReference type="GO" id="GO:0005886">
    <property type="term" value="C:plasma membrane"/>
    <property type="evidence" value="ECO:0007669"/>
    <property type="project" value="UniProtKB-SubCell"/>
</dbReference>
<dbReference type="GO" id="GO:0005524">
    <property type="term" value="F:ATP binding"/>
    <property type="evidence" value="ECO:0007669"/>
    <property type="project" value="UniProtKB-KW"/>
</dbReference>
<dbReference type="GO" id="GO:0004672">
    <property type="term" value="F:protein kinase activity"/>
    <property type="evidence" value="ECO:0007669"/>
    <property type="project" value="UniProtKB-UniRule"/>
</dbReference>
<dbReference type="GO" id="GO:0010795">
    <property type="term" value="P:regulation of ubiquinone biosynthetic process"/>
    <property type="evidence" value="ECO:0007669"/>
    <property type="project" value="UniProtKB-UniRule"/>
</dbReference>
<dbReference type="GO" id="GO:0006744">
    <property type="term" value="P:ubiquinone biosynthetic process"/>
    <property type="evidence" value="ECO:0007669"/>
    <property type="project" value="UniProtKB-UniPathway"/>
</dbReference>
<dbReference type="CDD" id="cd13972">
    <property type="entry name" value="UbiB"/>
    <property type="match status" value="1"/>
</dbReference>
<dbReference type="HAMAP" id="MF_00414">
    <property type="entry name" value="UbiB"/>
    <property type="match status" value="1"/>
</dbReference>
<dbReference type="InterPro" id="IPR004147">
    <property type="entry name" value="ABC1_dom"/>
</dbReference>
<dbReference type="InterPro" id="IPR011009">
    <property type="entry name" value="Kinase-like_dom_sf"/>
</dbReference>
<dbReference type="InterPro" id="IPR010232">
    <property type="entry name" value="UbiB"/>
</dbReference>
<dbReference type="InterPro" id="IPR045308">
    <property type="entry name" value="UbiB_bact"/>
</dbReference>
<dbReference type="InterPro" id="IPR050154">
    <property type="entry name" value="UbiB_kinase"/>
</dbReference>
<dbReference type="NCBIfam" id="NF003404">
    <property type="entry name" value="PRK04750.1"/>
    <property type="match status" value="1"/>
</dbReference>
<dbReference type="NCBIfam" id="TIGR01982">
    <property type="entry name" value="UbiB"/>
    <property type="match status" value="1"/>
</dbReference>
<dbReference type="PANTHER" id="PTHR10566">
    <property type="entry name" value="CHAPERONE-ACTIVITY OF BC1 COMPLEX CABC1 -RELATED"/>
    <property type="match status" value="1"/>
</dbReference>
<dbReference type="PANTHER" id="PTHR10566:SF113">
    <property type="entry name" value="PROTEIN ACTIVITY OF BC1 COMPLEX KINASE 7, CHLOROPLASTIC"/>
    <property type="match status" value="1"/>
</dbReference>
<dbReference type="Pfam" id="PF03109">
    <property type="entry name" value="ABC1"/>
    <property type="match status" value="1"/>
</dbReference>
<dbReference type="SUPFAM" id="SSF56112">
    <property type="entry name" value="Protein kinase-like (PK-like)"/>
    <property type="match status" value="1"/>
</dbReference>
<evidence type="ECO:0000255" key="1">
    <source>
        <dbReference type="HAMAP-Rule" id="MF_00414"/>
    </source>
</evidence>
<organism>
    <name type="scientific">Xanthomonas campestris pv. campestris (strain 8004)</name>
    <dbReference type="NCBI Taxonomy" id="314565"/>
    <lineage>
        <taxon>Bacteria</taxon>
        <taxon>Pseudomonadati</taxon>
        <taxon>Pseudomonadota</taxon>
        <taxon>Gammaproteobacteria</taxon>
        <taxon>Lysobacterales</taxon>
        <taxon>Lysobacteraceae</taxon>
        <taxon>Xanthomonas</taxon>
    </lineage>
</organism>
<accession>Q4V052</accession>
<gene>
    <name evidence="1" type="primary">ubiB</name>
    <name type="ordered locus">XC_0234</name>
</gene>